<gene>
    <name evidence="9 12" type="primary">POGLUT3</name>
    <name evidence="12" type="synonym">KDELC2</name>
    <name type="ORF">UNQ1904/PRO4350</name>
</gene>
<sequence length="507" mass="58572">MRRLPRALLLQLRLALLVAAGAPEVLVSAPRSLVWGPGLQAAVVLPVRYFYLQAVNSEGQNLTRSPAGETPFKVVVKSLSPKELVRIHVPKPLDRNDGTFLMRYRMYETVDEGLKIEVLYGDEHVAQSPYILKGPVYHEYCECPEDPQAWQKTLSCPTKEPQIAKDFASFPSINLQQMLKEVPKRFGDERGAIVHYTILNNHVYRRSLGKYTDFKMFSDEILLSLTRKVLLPDLEFYVNLGDWPLEHRKVNGTPSPIPIISWCGSLDSRDVVLPTYDITHSMLEAMRGVTNDLLSIQGNTGPSWINKTERAFFRGRDSREERLQLVQLSKENPQLLDAGITGYFFFQEKEKELGKAKLMGFFDFFKYKYQVNVDGTVAAYRYPYLMLGDSLVLKQDSPYYEHFYMALEPWKHYVPIKRNLSDLLEKVKWAKENDEEAKKIAKEGQLMARDLLQPHRLYCYYYQVLQKYAERQSSKPEVRDGMELVPQPEDSTAICQCHRKKPSREEL</sequence>
<feature type="signal peptide" evidence="1">
    <location>
        <begin position="1"/>
        <end position="20"/>
    </location>
</feature>
<feature type="chain" id="PRO_0000247196" description="Protein O-glucosyltransferase 3">
    <location>
        <begin position="21"/>
        <end position="507"/>
    </location>
</feature>
<feature type="repeat" description="Filamin">
    <location>
        <begin position="24"/>
        <end position="134"/>
    </location>
</feature>
<feature type="short sequence motif" description="Prevents secretion from ER" evidence="2">
    <location>
        <begin position="504"/>
        <end position="507"/>
    </location>
</feature>
<feature type="glycosylation site" description="N-linked (GlcNAc...) asparagine" evidence="4">
    <location>
        <position position="61"/>
    </location>
</feature>
<feature type="glycosylation site" description="N-linked (GlcNAc...) asparagine" evidence="4">
    <location>
        <position position="306"/>
    </location>
</feature>
<feature type="splice variant" id="VSP_019944" description="In isoform 2 and isoform 3." evidence="7 8">
    <location>
        <begin position="1"/>
        <end position="56"/>
    </location>
</feature>
<feature type="splice variant" id="VSP_019945" description="In isoform 2 and isoform 3." evidence="7 8">
    <original>SEGQNLTRSPA</original>
    <variation>MVELFIFLFLL</variation>
    <location>
        <begin position="57"/>
        <end position="67"/>
    </location>
</feature>
<feature type="splice variant" id="VSP_019946" description="In isoform 3." evidence="8">
    <original>ENDEEAKKIAKEGQLMARDLLQPHRLYCYYYQVL</original>
    <variation>SFTLSPRLECSGTISTHCNLCLPGSRNFVPQPPE</variation>
    <location>
        <begin position="432"/>
        <end position="465"/>
    </location>
</feature>
<feature type="splice variant" id="VSP_019947" description="In isoform 3." evidence="8">
    <location>
        <begin position="466"/>
        <end position="507"/>
    </location>
</feature>
<feature type="sequence variant" id="VAR_027086" description="In dbSNP:rs17853654." evidence="3">
    <original>R</original>
    <variation>L</variation>
    <location>
        <position position="319"/>
    </location>
</feature>
<feature type="sequence conflict" description="In Ref. 1; AAQ09021." evidence="10" ref="1">
    <original>L</original>
    <variation>S</variation>
    <location>
        <position position="101"/>
    </location>
</feature>
<feature type="sequence conflict" description="In Ref. 1; AAQ09021." evidence="10" ref="1">
    <original>K</original>
    <variation>T</variation>
    <location>
        <position position="115"/>
    </location>
</feature>
<feature type="sequence conflict" description="In Ref. 1; AAQ09021." evidence="10" ref="1">
    <original>L</original>
    <variation>S</variation>
    <location>
        <position position="132"/>
    </location>
</feature>
<feature type="sequence conflict" description="In Ref. 1; AAQ09021." evidence="10" ref="1">
    <original>T</original>
    <variation>N</variation>
    <location>
        <position position="158"/>
    </location>
</feature>
<feature type="sequence conflict" description="In Ref. 1; AAQ09021." evidence="10" ref="1">
    <original>P</original>
    <variation>T</variation>
    <location>
        <position position="161"/>
    </location>
</feature>
<feature type="sequence conflict" description="In Ref. 1; AAQ09021." evidence="10" ref="1">
    <original>R</original>
    <variation>S</variation>
    <location>
        <position position="185"/>
    </location>
</feature>
<feature type="sequence conflict" description="In Ref. 1; AAQ09021." evidence="10" ref="1">
    <original>D</original>
    <variation>Y</variation>
    <location>
        <position position="188"/>
    </location>
</feature>
<keyword id="KW-0025">Alternative splicing</keyword>
<keyword id="KW-0256">Endoplasmic reticulum</keyword>
<keyword id="KW-0325">Glycoprotein</keyword>
<keyword id="KW-0328">Glycosyltransferase</keyword>
<keyword id="KW-1267">Proteomics identification</keyword>
<keyword id="KW-1185">Reference proteome</keyword>
<keyword id="KW-0732">Signal</keyword>
<keyword id="KW-0808">Transferase</keyword>
<evidence type="ECO:0000255" key="1"/>
<evidence type="ECO:0000255" key="2">
    <source>
        <dbReference type="PROSITE-ProRule" id="PRU10138"/>
    </source>
</evidence>
<evidence type="ECO:0000269" key="3">
    <source>
    </source>
</evidence>
<evidence type="ECO:0000269" key="4">
    <source>
    </source>
</evidence>
<evidence type="ECO:0000269" key="5">
    <source>
    </source>
</evidence>
<evidence type="ECO:0000269" key="6">
    <source>
    </source>
</evidence>
<evidence type="ECO:0000303" key="7">
    <source>
    </source>
</evidence>
<evidence type="ECO:0000303" key="8">
    <source>
    </source>
</evidence>
<evidence type="ECO:0000303" key="9">
    <source>
    </source>
</evidence>
<evidence type="ECO:0000305" key="10"/>
<evidence type="ECO:0000305" key="11">
    <source>
    </source>
</evidence>
<evidence type="ECO:0000312" key="12">
    <source>
        <dbReference type="HGNC" id="HGNC:28496"/>
    </source>
</evidence>
<accession>Q7Z4H8</accession>
<accession>Q6UWW2</accession>
<accession>Q6ZUM9</accession>
<accession>Q8N7L8</accession>
<accession>Q8NE24</accession>
<reference key="1">
    <citation type="submission" date="2002-07" db="EMBL/GenBank/DDBJ databases">
        <authorList>
            <person name="Ding P."/>
            <person name="Han W."/>
            <person name="Xia D."/>
            <person name="Wu C."/>
            <person name="Liu Y."/>
            <person name="Wu C."/>
            <person name="Ma D."/>
        </authorList>
    </citation>
    <scope>NUCLEOTIDE SEQUENCE [MRNA] (ISOFORM 1)</scope>
    <source>
        <tissue>Testis</tissue>
    </source>
</reference>
<reference key="2">
    <citation type="journal article" date="2003" name="Genome Res.">
        <title>The secreted protein discovery initiative (SPDI), a large-scale effort to identify novel human secreted and transmembrane proteins: a bioinformatics assessment.</title>
        <authorList>
            <person name="Clark H.F."/>
            <person name="Gurney A.L."/>
            <person name="Abaya E."/>
            <person name="Baker K."/>
            <person name="Baldwin D.T."/>
            <person name="Brush J."/>
            <person name="Chen J."/>
            <person name="Chow B."/>
            <person name="Chui C."/>
            <person name="Crowley C."/>
            <person name="Currell B."/>
            <person name="Deuel B."/>
            <person name="Dowd P."/>
            <person name="Eaton D."/>
            <person name="Foster J.S."/>
            <person name="Grimaldi C."/>
            <person name="Gu Q."/>
            <person name="Hass P.E."/>
            <person name="Heldens S."/>
            <person name="Huang A."/>
            <person name="Kim H.S."/>
            <person name="Klimowski L."/>
            <person name="Jin Y."/>
            <person name="Johnson S."/>
            <person name="Lee J."/>
            <person name="Lewis L."/>
            <person name="Liao D."/>
            <person name="Mark M.R."/>
            <person name="Robbie E."/>
            <person name="Sanchez C."/>
            <person name="Schoenfeld J."/>
            <person name="Seshagiri S."/>
            <person name="Simmons L."/>
            <person name="Singh J."/>
            <person name="Smith V."/>
            <person name="Stinson J."/>
            <person name="Vagts A."/>
            <person name="Vandlen R.L."/>
            <person name="Watanabe C."/>
            <person name="Wieand D."/>
            <person name="Woods K."/>
            <person name="Xie M.-H."/>
            <person name="Yansura D.G."/>
            <person name="Yi S."/>
            <person name="Yu G."/>
            <person name="Yuan J."/>
            <person name="Zhang M."/>
            <person name="Zhang Z."/>
            <person name="Goddard A.D."/>
            <person name="Wood W.I."/>
            <person name="Godowski P.J."/>
            <person name="Gray A.M."/>
        </authorList>
    </citation>
    <scope>NUCLEOTIDE SEQUENCE [LARGE SCALE MRNA] (ISOFORM 2)</scope>
</reference>
<reference key="3">
    <citation type="journal article" date="2004" name="Nat. Genet.">
        <title>Complete sequencing and characterization of 21,243 full-length human cDNAs.</title>
        <authorList>
            <person name="Ota T."/>
            <person name="Suzuki Y."/>
            <person name="Nishikawa T."/>
            <person name="Otsuki T."/>
            <person name="Sugiyama T."/>
            <person name="Irie R."/>
            <person name="Wakamatsu A."/>
            <person name="Hayashi K."/>
            <person name="Sato H."/>
            <person name="Nagai K."/>
            <person name="Kimura K."/>
            <person name="Makita H."/>
            <person name="Sekine M."/>
            <person name="Obayashi M."/>
            <person name="Nishi T."/>
            <person name="Shibahara T."/>
            <person name="Tanaka T."/>
            <person name="Ishii S."/>
            <person name="Yamamoto J."/>
            <person name="Saito K."/>
            <person name="Kawai Y."/>
            <person name="Isono Y."/>
            <person name="Nakamura Y."/>
            <person name="Nagahari K."/>
            <person name="Murakami K."/>
            <person name="Yasuda T."/>
            <person name="Iwayanagi T."/>
            <person name="Wagatsuma M."/>
            <person name="Shiratori A."/>
            <person name="Sudo H."/>
            <person name="Hosoiri T."/>
            <person name="Kaku Y."/>
            <person name="Kodaira H."/>
            <person name="Kondo H."/>
            <person name="Sugawara M."/>
            <person name="Takahashi M."/>
            <person name="Kanda K."/>
            <person name="Yokoi T."/>
            <person name="Furuya T."/>
            <person name="Kikkawa E."/>
            <person name="Omura Y."/>
            <person name="Abe K."/>
            <person name="Kamihara K."/>
            <person name="Katsuta N."/>
            <person name="Sato K."/>
            <person name="Tanikawa M."/>
            <person name="Yamazaki M."/>
            <person name="Ninomiya K."/>
            <person name="Ishibashi T."/>
            <person name="Yamashita H."/>
            <person name="Murakawa K."/>
            <person name="Fujimori K."/>
            <person name="Tanai H."/>
            <person name="Kimata M."/>
            <person name="Watanabe M."/>
            <person name="Hiraoka S."/>
            <person name="Chiba Y."/>
            <person name="Ishida S."/>
            <person name="Ono Y."/>
            <person name="Takiguchi S."/>
            <person name="Watanabe S."/>
            <person name="Yosida M."/>
            <person name="Hotuta T."/>
            <person name="Kusano J."/>
            <person name="Kanehori K."/>
            <person name="Takahashi-Fujii A."/>
            <person name="Hara H."/>
            <person name="Tanase T.-O."/>
            <person name="Nomura Y."/>
            <person name="Togiya S."/>
            <person name="Komai F."/>
            <person name="Hara R."/>
            <person name="Takeuchi K."/>
            <person name="Arita M."/>
            <person name="Imose N."/>
            <person name="Musashino K."/>
            <person name="Yuuki H."/>
            <person name="Oshima A."/>
            <person name="Sasaki N."/>
            <person name="Aotsuka S."/>
            <person name="Yoshikawa Y."/>
            <person name="Matsunawa H."/>
            <person name="Ichihara T."/>
            <person name="Shiohata N."/>
            <person name="Sano S."/>
            <person name="Moriya S."/>
            <person name="Momiyama H."/>
            <person name="Satoh N."/>
            <person name="Takami S."/>
            <person name="Terashima Y."/>
            <person name="Suzuki O."/>
            <person name="Nakagawa S."/>
            <person name="Senoh A."/>
            <person name="Mizoguchi H."/>
            <person name="Goto Y."/>
            <person name="Shimizu F."/>
            <person name="Wakebe H."/>
            <person name="Hishigaki H."/>
            <person name="Watanabe T."/>
            <person name="Sugiyama A."/>
            <person name="Takemoto M."/>
            <person name="Kawakami B."/>
            <person name="Yamazaki M."/>
            <person name="Watanabe K."/>
            <person name="Kumagai A."/>
            <person name="Itakura S."/>
            <person name="Fukuzumi Y."/>
            <person name="Fujimori Y."/>
            <person name="Komiyama M."/>
            <person name="Tashiro H."/>
            <person name="Tanigami A."/>
            <person name="Fujiwara T."/>
            <person name="Ono T."/>
            <person name="Yamada K."/>
            <person name="Fujii Y."/>
            <person name="Ozaki K."/>
            <person name="Hirao M."/>
            <person name="Ohmori Y."/>
            <person name="Kawabata A."/>
            <person name="Hikiji T."/>
            <person name="Kobatake N."/>
            <person name="Inagaki H."/>
            <person name="Ikema Y."/>
            <person name="Okamoto S."/>
            <person name="Okitani R."/>
            <person name="Kawakami T."/>
            <person name="Noguchi S."/>
            <person name="Itoh T."/>
            <person name="Shigeta K."/>
            <person name="Senba T."/>
            <person name="Matsumura K."/>
            <person name="Nakajima Y."/>
            <person name="Mizuno T."/>
            <person name="Morinaga M."/>
            <person name="Sasaki M."/>
            <person name="Togashi T."/>
            <person name="Oyama M."/>
            <person name="Hata H."/>
            <person name="Watanabe M."/>
            <person name="Komatsu T."/>
            <person name="Mizushima-Sugano J."/>
            <person name="Satoh T."/>
            <person name="Shirai Y."/>
            <person name="Takahashi Y."/>
            <person name="Nakagawa K."/>
            <person name="Okumura K."/>
            <person name="Nagase T."/>
            <person name="Nomura N."/>
            <person name="Kikuchi H."/>
            <person name="Masuho Y."/>
            <person name="Yamashita R."/>
            <person name="Nakai K."/>
            <person name="Yada T."/>
            <person name="Nakamura Y."/>
            <person name="Ohara O."/>
            <person name="Isogai T."/>
            <person name="Sugano S."/>
        </authorList>
    </citation>
    <scope>NUCLEOTIDE SEQUENCE [LARGE SCALE MRNA] (ISOFORM 3)</scope>
    <scope>NUCLEOTIDE SEQUENCE [LARGE SCALE MRNA] OF 324-507 (ISOFORMS 1/2)</scope>
    <source>
        <tissue>Placenta</tissue>
        <tissue>Uterus</tissue>
    </source>
</reference>
<reference key="4">
    <citation type="journal article" date="2004" name="Genome Res.">
        <title>The status, quality, and expansion of the NIH full-length cDNA project: the Mammalian Gene Collection (MGC).</title>
        <authorList>
            <consortium name="The MGC Project Team"/>
        </authorList>
    </citation>
    <scope>NUCLEOTIDE SEQUENCE [LARGE SCALE MRNA] (ISOFORM 1)</scope>
    <scope>VARIANT LEU-319</scope>
    <source>
        <tissue>Testis</tissue>
    </source>
</reference>
<reference key="5">
    <citation type="journal article" date="2009" name="J. Proteome Res.">
        <title>Glycoproteomics analysis of human liver tissue by combination of multiple enzyme digestion and hydrazide chemistry.</title>
        <authorList>
            <person name="Chen R."/>
            <person name="Jiang X."/>
            <person name="Sun D."/>
            <person name="Han G."/>
            <person name="Wang F."/>
            <person name="Ye M."/>
            <person name="Wang L."/>
            <person name="Zou H."/>
        </authorList>
    </citation>
    <scope>GLYCOSYLATION [LARGE SCALE ANALYSIS] AT ASN-61 AND ASN-306</scope>
    <source>
        <tissue>Liver</tissue>
    </source>
</reference>
<reference key="6">
    <citation type="journal article" date="2011" name="BMC Syst. Biol.">
        <title>Initial characterization of the human central proteome.</title>
        <authorList>
            <person name="Burkard T.R."/>
            <person name="Planyavsky M."/>
            <person name="Kaupe I."/>
            <person name="Breitwieser F.P."/>
            <person name="Buerckstuemmer T."/>
            <person name="Bennett K.L."/>
            <person name="Superti-Furga G."/>
            <person name="Colinge J."/>
        </authorList>
    </citation>
    <scope>IDENTIFICATION BY MASS SPECTROMETRY [LARGE SCALE ANALYSIS]</scope>
</reference>
<reference key="7">
    <citation type="journal article" date="2015" name="Proteomics">
        <title>N-terminome analysis of the human mitochondrial proteome.</title>
        <authorList>
            <person name="Vaca Jacome A.S."/>
            <person name="Rabilloud T."/>
            <person name="Schaeffer-Reiss C."/>
            <person name="Rompais M."/>
            <person name="Ayoub D."/>
            <person name="Lane L."/>
            <person name="Bairoch A."/>
            <person name="Van Dorsselaer A."/>
            <person name="Carapito C."/>
        </authorList>
    </citation>
    <scope>IDENTIFICATION BY MASS SPECTROMETRY [LARGE SCALE ANALYSIS]</scope>
</reference>
<reference key="8">
    <citation type="journal article" date="2018" name="Proc. Natl. Acad. Sci. U.S.A.">
        <title>Two novel protein O-glucosyltransferases that modify sites distinct from POGLUT1 and affect Notch trafficking and signaling.</title>
        <authorList>
            <person name="Takeuchi H."/>
            <person name="Schneider M."/>
            <person name="Williamson D.B."/>
            <person name="Ito A."/>
            <person name="Takeuchi M."/>
            <person name="Handford P.A."/>
            <person name="Haltiwanger R.S."/>
        </authorList>
    </citation>
    <scope>FUNCTION</scope>
    <scope>CATALYTIC ACTIVITY</scope>
    <scope>PATHWAY</scope>
    <scope>SUBSTRATE SPECIFICITY</scope>
</reference>
<reference key="9">
    <citation type="journal article" date="2021" name="J. Biol. Chem.">
        <title>POGLUT2 and POGLUT3 O-glucosylate multiple EGF repeats in fibrillin-1, -2, and LTBP1 and promote secretion of fibrillin-1.</title>
        <authorList>
            <person name="Williamson D.B."/>
            <person name="Sohn C.J."/>
            <person name="Ito A."/>
            <person name="Haltiwanger R.S."/>
        </authorList>
    </citation>
    <scope>FUNCTION</scope>
</reference>
<organism>
    <name type="scientific">Homo sapiens</name>
    <name type="common">Human</name>
    <dbReference type="NCBI Taxonomy" id="9606"/>
    <lineage>
        <taxon>Eukaryota</taxon>
        <taxon>Metazoa</taxon>
        <taxon>Chordata</taxon>
        <taxon>Craniata</taxon>
        <taxon>Vertebrata</taxon>
        <taxon>Euteleostomi</taxon>
        <taxon>Mammalia</taxon>
        <taxon>Eutheria</taxon>
        <taxon>Euarchontoglires</taxon>
        <taxon>Primates</taxon>
        <taxon>Haplorrhini</taxon>
        <taxon>Catarrhini</taxon>
        <taxon>Hominidae</taxon>
        <taxon>Homo</taxon>
    </lineage>
</organism>
<proteinExistence type="evidence at protein level"/>
<dbReference type="EC" id="2.4.1.-" evidence="5"/>
<dbReference type="EC" id="2.4.2.-" evidence="5"/>
<dbReference type="EMBL" id="AF533708">
    <property type="protein sequence ID" value="AAQ09021.1"/>
    <property type="molecule type" value="mRNA"/>
</dbReference>
<dbReference type="EMBL" id="AY358616">
    <property type="protein sequence ID" value="AAQ88979.1"/>
    <property type="molecule type" value="mRNA"/>
</dbReference>
<dbReference type="EMBL" id="AK098206">
    <property type="protein sequence ID" value="BAC05260.1"/>
    <property type="status" value="ALT_INIT"/>
    <property type="molecule type" value="mRNA"/>
</dbReference>
<dbReference type="EMBL" id="AK125519">
    <property type="protein sequence ID" value="BAC86191.1"/>
    <property type="molecule type" value="mRNA"/>
</dbReference>
<dbReference type="EMBL" id="BC036526">
    <property type="protein sequence ID" value="AAH36526.3"/>
    <property type="molecule type" value="mRNA"/>
</dbReference>
<dbReference type="CCDS" id="CCDS41711.1">
    <molecule id="Q7Z4H8-1"/>
</dbReference>
<dbReference type="RefSeq" id="NP_714916.3">
    <molecule id="Q7Z4H8-1"/>
    <property type="nucleotide sequence ID" value="NM_153705.4"/>
</dbReference>
<dbReference type="RefSeq" id="XP_047282377.1">
    <molecule id="Q7Z4H8-2"/>
    <property type="nucleotide sequence ID" value="XM_047426421.1"/>
</dbReference>
<dbReference type="SMR" id="Q7Z4H8"/>
<dbReference type="BioGRID" id="126822">
    <property type="interactions" value="123"/>
</dbReference>
<dbReference type="FunCoup" id="Q7Z4H8">
    <property type="interactions" value="266"/>
</dbReference>
<dbReference type="IntAct" id="Q7Z4H8">
    <property type="interactions" value="28"/>
</dbReference>
<dbReference type="MINT" id="Q7Z4H8"/>
<dbReference type="STRING" id="9606.ENSP00000315386"/>
<dbReference type="GlyConnect" id="1431">
    <property type="glycosylation" value="8 N-Linked glycans (2 sites)"/>
</dbReference>
<dbReference type="GlyCosmos" id="Q7Z4H8">
    <property type="glycosylation" value="2 sites, 7 glycans"/>
</dbReference>
<dbReference type="GlyGen" id="Q7Z4H8">
    <property type="glycosylation" value="10 sites, 11 N-linked glycans (4 sites), 2 O-linked glycans (5 sites)"/>
</dbReference>
<dbReference type="iPTMnet" id="Q7Z4H8"/>
<dbReference type="PhosphoSitePlus" id="Q7Z4H8"/>
<dbReference type="SwissPalm" id="Q7Z4H8"/>
<dbReference type="BioMuta" id="KDELC2"/>
<dbReference type="DMDM" id="110810398"/>
<dbReference type="jPOST" id="Q7Z4H8"/>
<dbReference type="MassIVE" id="Q7Z4H8"/>
<dbReference type="PaxDb" id="9606-ENSP00000315386"/>
<dbReference type="PeptideAtlas" id="Q7Z4H8"/>
<dbReference type="ProteomicsDB" id="69187">
    <molecule id="Q7Z4H8-1"/>
</dbReference>
<dbReference type="ProteomicsDB" id="69188">
    <molecule id="Q7Z4H8-2"/>
</dbReference>
<dbReference type="ProteomicsDB" id="69189">
    <molecule id="Q7Z4H8-3"/>
</dbReference>
<dbReference type="Pumba" id="Q7Z4H8"/>
<dbReference type="Antibodypedia" id="50833">
    <property type="antibodies" value="57 antibodies from 16 providers"/>
</dbReference>
<dbReference type="DNASU" id="143888"/>
<dbReference type="Ensembl" id="ENST00000323468.10">
    <molecule id="Q7Z4H8-1"/>
    <property type="protein sequence ID" value="ENSP00000315386.5"/>
    <property type="gene ID" value="ENSG00000178202.14"/>
</dbReference>
<dbReference type="Ensembl" id="ENST00000434945.6">
    <molecule id="Q7Z4H8-2"/>
    <property type="protein sequence ID" value="ENSP00000413429.2"/>
    <property type="gene ID" value="ENSG00000178202.14"/>
</dbReference>
<dbReference type="Ensembl" id="ENST00000530529.5">
    <molecule id="Q7Z4H8-3"/>
    <property type="protein sequence ID" value="ENSP00000431796.1"/>
    <property type="gene ID" value="ENSG00000178202.14"/>
</dbReference>
<dbReference type="GeneID" id="143888"/>
<dbReference type="KEGG" id="hsa:143888"/>
<dbReference type="MANE-Select" id="ENST00000323468.10">
    <property type="protein sequence ID" value="ENSP00000315386.5"/>
    <property type="RefSeq nucleotide sequence ID" value="NM_153705.5"/>
    <property type="RefSeq protein sequence ID" value="NP_714916.3"/>
</dbReference>
<dbReference type="UCSC" id="uc001pki.3">
    <molecule id="Q7Z4H8-1"/>
    <property type="organism name" value="human"/>
</dbReference>
<dbReference type="AGR" id="HGNC:28496"/>
<dbReference type="CTD" id="143888"/>
<dbReference type="DisGeNET" id="143888"/>
<dbReference type="GeneCards" id="POGLUT3"/>
<dbReference type="HGNC" id="HGNC:28496">
    <property type="gene designation" value="POGLUT3"/>
</dbReference>
<dbReference type="HPA" id="ENSG00000178202">
    <property type="expression patterns" value="Low tissue specificity"/>
</dbReference>
<dbReference type="MalaCards" id="POGLUT3"/>
<dbReference type="MIM" id="618503">
    <property type="type" value="gene"/>
</dbReference>
<dbReference type="neXtProt" id="NX_Q7Z4H8"/>
<dbReference type="OpenTargets" id="ENSG00000178202"/>
<dbReference type="PharmGKB" id="PA134904072"/>
<dbReference type="VEuPathDB" id="HostDB:ENSG00000178202"/>
<dbReference type="eggNOG" id="KOG2458">
    <property type="taxonomic scope" value="Eukaryota"/>
</dbReference>
<dbReference type="GeneTree" id="ENSGT00940000159028"/>
<dbReference type="HOGENOM" id="CLU_041919_0_0_1"/>
<dbReference type="InParanoid" id="Q7Z4H8"/>
<dbReference type="OMA" id="GITAWFF"/>
<dbReference type="OrthoDB" id="541052at2759"/>
<dbReference type="PAN-GO" id="Q7Z4H8">
    <property type="GO annotations" value="2 GO annotations based on evolutionary models"/>
</dbReference>
<dbReference type="PhylomeDB" id="Q7Z4H8"/>
<dbReference type="TreeFam" id="TF323280"/>
<dbReference type="PathwayCommons" id="Q7Z4H8"/>
<dbReference type="SignaLink" id="Q7Z4H8"/>
<dbReference type="UniPathway" id="UPA00378"/>
<dbReference type="BioGRID-ORCS" id="143888">
    <property type="hits" value="6 hits in 1161 CRISPR screens"/>
</dbReference>
<dbReference type="ChiTaRS" id="KDELC2">
    <property type="organism name" value="human"/>
</dbReference>
<dbReference type="GenomeRNAi" id="143888"/>
<dbReference type="Pharos" id="Q7Z4H8">
    <property type="development level" value="Tdark"/>
</dbReference>
<dbReference type="PRO" id="PR:Q7Z4H8"/>
<dbReference type="Proteomes" id="UP000005640">
    <property type="component" value="Chromosome 11"/>
</dbReference>
<dbReference type="RNAct" id="Q7Z4H8">
    <property type="molecule type" value="protein"/>
</dbReference>
<dbReference type="Bgee" id="ENSG00000178202">
    <property type="expression patterns" value="Expressed in calcaneal tendon and 177 other cell types or tissues"/>
</dbReference>
<dbReference type="ExpressionAtlas" id="Q7Z4H8">
    <property type="expression patterns" value="baseline and differential"/>
</dbReference>
<dbReference type="GO" id="GO:0012505">
    <property type="term" value="C:endomembrane system"/>
    <property type="evidence" value="ECO:0000318"/>
    <property type="project" value="GO_Central"/>
</dbReference>
<dbReference type="GO" id="GO:0005788">
    <property type="term" value="C:endoplasmic reticulum lumen"/>
    <property type="evidence" value="ECO:0007669"/>
    <property type="project" value="UniProtKB-SubCell"/>
</dbReference>
<dbReference type="GO" id="GO:0140561">
    <property type="term" value="F:EGF-domain serine glucosyltransferase activity"/>
    <property type="evidence" value="ECO:0007669"/>
    <property type="project" value="RHEA"/>
</dbReference>
<dbReference type="GO" id="GO:0140562">
    <property type="term" value="F:EGF-domain serine xylosyltransferase activity"/>
    <property type="evidence" value="ECO:0007669"/>
    <property type="project" value="RHEA"/>
</dbReference>
<dbReference type="GO" id="GO:0046527">
    <property type="term" value="F:glucosyltransferase activity"/>
    <property type="evidence" value="ECO:0000318"/>
    <property type="project" value="GO_Central"/>
</dbReference>
<dbReference type="GO" id="GO:0035251">
    <property type="term" value="F:UDP-glucosyltransferase activity"/>
    <property type="evidence" value="ECO:0000314"/>
    <property type="project" value="UniProtKB"/>
</dbReference>
<dbReference type="GO" id="GO:0035252">
    <property type="term" value="F:UDP-xylosyltransferase activity"/>
    <property type="evidence" value="ECO:0000314"/>
    <property type="project" value="UniProtKB"/>
</dbReference>
<dbReference type="GO" id="GO:0018242">
    <property type="term" value="P:protein O-linked glycosylation via serine"/>
    <property type="evidence" value="ECO:0000314"/>
    <property type="project" value="UniProtKB"/>
</dbReference>
<dbReference type="FunFam" id="2.60.40.10:FF:000419">
    <property type="entry name" value="KDEL (Lys-Asp-Glu-Leu) containing 1"/>
    <property type="match status" value="1"/>
</dbReference>
<dbReference type="Gene3D" id="2.60.40.10">
    <property type="entry name" value="Immunoglobulins"/>
    <property type="match status" value="1"/>
</dbReference>
<dbReference type="InterPro" id="IPR006598">
    <property type="entry name" value="CAP10"/>
</dbReference>
<dbReference type="InterPro" id="IPR017868">
    <property type="entry name" value="Filamin/ABP280_repeat-like"/>
</dbReference>
<dbReference type="InterPro" id="IPR001298">
    <property type="entry name" value="Filamin/ABP280_rpt"/>
</dbReference>
<dbReference type="InterPro" id="IPR013783">
    <property type="entry name" value="Ig-like_fold"/>
</dbReference>
<dbReference type="InterPro" id="IPR014756">
    <property type="entry name" value="Ig_E-set"/>
</dbReference>
<dbReference type="InterPro" id="IPR051091">
    <property type="entry name" value="O-Glucosyltr/Glycosyltrsf_90"/>
</dbReference>
<dbReference type="PANTHER" id="PTHR12203">
    <property type="entry name" value="KDEL LYS-ASP-GLU-LEU CONTAINING - RELATED"/>
    <property type="match status" value="1"/>
</dbReference>
<dbReference type="PANTHER" id="PTHR12203:SF18">
    <property type="entry name" value="PROTEIN O-GLUCOSYLTRANSFERASE 3"/>
    <property type="match status" value="1"/>
</dbReference>
<dbReference type="Pfam" id="PF00630">
    <property type="entry name" value="Filamin"/>
    <property type="match status" value="1"/>
</dbReference>
<dbReference type="Pfam" id="PF05686">
    <property type="entry name" value="Glyco_transf_90"/>
    <property type="match status" value="1"/>
</dbReference>
<dbReference type="SMART" id="SM00672">
    <property type="entry name" value="CAP10"/>
    <property type="match status" value="1"/>
</dbReference>
<dbReference type="SMART" id="SM00557">
    <property type="entry name" value="IG_FLMN"/>
    <property type="match status" value="1"/>
</dbReference>
<dbReference type="SUPFAM" id="SSF81296">
    <property type="entry name" value="E set domains"/>
    <property type="match status" value="1"/>
</dbReference>
<dbReference type="PROSITE" id="PS00014">
    <property type="entry name" value="ER_TARGET"/>
    <property type="match status" value="1"/>
</dbReference>
<dbReference type="PROSITE" id="PS50194">
    <property type="entry name" value="FILAMIN_REPEAT"/>
    <property type="match status" value="1"/>
</dbReference>
<name>PLGT3_HUMAN</name>
<protein>
    <recommendedName>
        <fullName evidence="11">Protein O-glucosyltransferase 3</fullName>
        <ecNumber evidence="5">2.4.1.-</ecNumber>
    </recommendedName>
    <alternativeName>
        <fullName evidence="12">KDEL motif-containing protein 2</fullName>
    </alternativeName>
    <alternativeName>
        <fullName evidence="11">Protein O-xylosyltransferase POGLUT3</fullName>
        <ecNumber evidence="5">2.4.2.-</ecNumber>
    </alternativeName>
</protein>
<comment type="function">
    <text evidence="5 6">Protein glucosyltransferase that catalyzes the transfer of glucose from UDP-glucose to a serine residue within the consensus sequence peptide C-X-N-T-X-G-S-F-X-C (PubMed:30127001). Can also catalyze the transfer of xylose from UDP-xylose but less efficiently (PubMed:30127001). Specifically targets extracellular EGF repeats of proteins such as NOTCH1, NOTCH3, FBN1, FBN2 and LTBP1 (PubMed:30127001, PubMed:34411563). May regulate the transport of NOTCH1 and NOTCH3 to the plasma membrane and thereby the Notch signaling pathway (PubMed:30127001).</text>
</comment>
<comment type="catalytic activity">
    <reaction evidence="5">
        <text>L-seryl-[EGF-like domain protein] + UDP-alpha-D-glucose = 3-O-(beta-D-glucosyl)-L-seryl-[EGF-like domain protein] + UDP + H(+)</text>
        <dbReference type="Rhea" id="RHEA:58116"/>
        <dbReference type="Rhea" id="RHEA-COMP:14610"/>
        <dbReference type="Rhea" id="RHEA-COMP:16010"/>
        <dbReference type="ChEBI" id="CHEBI:15378"/>
        <dbReference type="ChEBI" id="CHEBI:29999"/>
        <dbReference type="ChEBI" id="CHEBI:58223"/>
        <dbReference type="ChEBI" id="CHEBI:58885"/>
        <dbReference type="ChEBI" id="CHEBI:140576"/>
    </reaction>
</comment>
<comment type="catalytic activity">
    <reaction evidence="5">
        <text>L-seryl-[EGF-like domain protein] + UDP-alpha-D-xylose = 3-O-(beta-D-xylosyl)-L-seryl-[EGF-like domain protein] + UDP + H(+)</text>
        <dbReference type="Rhea" id="RHEA:62016"/>
        <dbReference type="Rhea" id="RHEA-COMP:16010"/>
        <dbReference type="Rhea" id="RHEA-COMP:16011"/>
        <dbReference type="ChEBI" id="CHEBI:15378"/>
        <dbReference type="ChEBI" id="CHEBI:29999"/>
        <dbReference type="ChEBI" id="CHEBI:57632"/>
        <dbReference type="ChEBI" id="CHEBI:58223"/>
        <dbReference type="ChEBI" id="CHEBI:132085"/>
    </reaction>
</comment>
<comment type="pathway">
    <text evidence="5">Protein modification; protein glycosylation.</text>
</comment>
<comment type="subcellular location">
    <subcellularLocation>
        <location evidence="2">Endoplasmic reticulum lumen</location>
    </subcellularLocation>
</comment>
<comment type="alternative products">
    <event type="alternative splicing"/>
    <isoform>
        <id>Q7Z4H8-1</id>
        <name>1</name>
        <sequence type="displayed"/>
    </isoform>
    <isoform>
        <id>Q7Z4H8-2</id>
        <name>2</name>
        <sequence type="described" ref="VSP_019944 VSP_019945"/>
    </isoform>
    <isoform>
        <id>Q7Z4H8-3</id>
        <name>3</name>
        <sequence type="described" ref="VSP_019944 VSP_019945 VSP_019946 VSP_019947"/>
    </isoform>
</comment>
<comment type="miscellaneous">
    <molecule>Isoform 3</molecule>
    <text evidence="10">May be produced at very low levels due to a premature stop codon in the mRNA, leading to nonsense-mediated mRNA decay.</text>
</comment>
<comment type="similarity">
    <text evidence="10">Belongs to the KDELC family.</text>
</comment>
<comment type="sequence caution" evidence="10">
    <conflict type="erroneous initiation">
        <sequence resource="EMBL-CDS" id="BAC05260"/>
    </conflict>
    <text>Truncated N-terminus.</text>
</comment>